<feature type="chain" id="PRO_1000145852" description="DNA integrity scanning protein DisA">
    <location>
        <begin position="1"/>
        <end position="357"/>
    </location>
</feature>
<feature type="domain" description="DAC" evidence="2">
    <location>
        <begin position="8"/>
        <end position="146"/>
    </location>
</feature>
<feature type="binding site" evidence="1">
    <location>
        <position position="75"/>
    </location>
    <ligand>
        <name>ATP</name>
        <dbReference type="ChEBI" id="CHEBI:30616"/>
    </ligand>
</feature>
<feature type="binding site" evidence="1">
    <location>
        <position position="93"/>
    </location>
    <ligand>
        <name>ATP</name>
        <dbReference type="ChEBI" id="CHEBI:30616"/>
    </ligand>
</feature>
<feature type="binding site" evidence="1">
    <location>
        <begin position="106"/>
        <end position="110"/>
    </location>
    <ligand>
        <name>ATP</name>
        <dbReference type="ChEBI" id="CHEBI:30616"/>
    </ligand>
</feature>
<proteinExistence type="inferred from homology"/>
<organism>
    <name type="scientific">Bacillus cereus (strain AH820)</name>
    <dbReference type="NCBI Taxonomy" id="405535"/>
    <lineage>
        <taxon>Bacteria</taxon>
        <taxon>Bacillati</taxon>
        <taxon>Bacillota</taxon>
        <taxon>Bacilli</taxon>
        <taxon>Bacillales</taxon>
        <taxon>Bacillaceae</taxon>
        <taxon>Bacillus</taxon>
        <taxon>Bacillus cereus group</taxon>
    </lineage>
</organism>
<evidence type="ECO:0000255" key="1">
    <source>
        <dbReference type="HAMAP-Rule" id="MF_01438"/>
    </source>
</evidence>
<evidence type="ECO:0000255" key="2">
    <source>
        <dbReference type="PROSITE-ProRule" id="PRU01130"/>
    </source>
</evidence>
<name>DISA_BACC0</name>
<sequence length="357" mass="40095">MEENKQRVKSMINILQLVAPGTPLREGIDNVLRAQTGGLIVLGYNEQIKSIVDGGFHINCAFSPASLYELAKMDGALILNETGSKILIANAQLVPESSIDSIETGMRHRTAERVAKQTGSLVVAISQRRNVITLYQGNLRYTLKDIGVILTKANQAIQTLEKYKAVWNDGITNLGILEFEEVVTMSEVVHVLHSVEMVLRIKNEILSYIHELGTEGRLIRLQLTELLADLEAEAALLIKDYYQEKTQDHHQILKKLQELANTQLLEDSDLVKLLGYPGQTSLEESVTPRGYRITSKISRVPPLIIENLINRFKTLQGVCRATINELDDVEGIGEVRAKKIREGLKRIQEHLYMSRHN</sequence>
<comment type="function">
    <text evidence="1">Participates in a DNA-damage check-point that is active prior to asymmetric division when DNA is damaged. DisA forms globular foci that rapidly scan along the chromosomes during sporulation, searching for lesions. When a lesion is present, DisA pauses at the lesion site. This triggers a cellular response that culminates in a temporary block in sporulation initiation.</text>
</comment>
<comment type="function">
    <text evidence="1">Also has diadenylate cyclase activity, catalyzing the condensation of 2 ATP molecules into cyclic di-AMP (c-di-AMP). c-di-AMP acts as a signaling molecule that couples DNA integrity with progression of sporulation. The rise in c-di-AMP level generated by DisA while scanning the chromosome, operates as a positive signal that advances sporulation; upon encountering a lesion, the DisA focus arrests at the damaged site and halts c-di-AMP synthesis.</text>
</comment>
<comment type="catalytic activity">
    <reaction evidence="1">
        <text>2 ATP = 3',3'-c-di-AMP + 2 diphosphate</text>
        <dbReference type="Rhea" id="RHEA:35655"/>
        <dbReference type="ChEBI" id="CHEBI:30616"/>
        <dbReference type="ChEBI" id="CHEBI:33019"/>
        <dbReference type="ChEBI" id="CHEBI:71500"/>
        <dbReference type="EC" id="2.7.7.85"/>
    </reaction>
</comment>
<comment type="cofactor">
    <cofactor evidence="1">
        <name>Mg(2+)</name>
        <dbReference type="ChEBI" id="CHEBI:18420"/>
    </cofactor>
</comment>
<comment type="subunit">
    <text evidence="1">Homooctamer.</text>
</comment>
<comment type="similarity">
    <text evidence="1">Belongs to the DisA family.</text>
</comment>
<reference key="1">
    <citation type="submission" date="2008-10" db="EMBL/GenBank/DDBJ databases">
        <title>Genome sequence of Bacillus cereus AH820.</title>
        <authorList>
            <person name="Dodson R.J."/>
            <person name="Durkin A.S."/>
            <person name="Rosovitz M.J."/>
            <person name="Rasko D.A."/>
            <person name="Hoffmaster A."/>
            <person name="Ravel J."/>
            <person name="Sutton G."/>
        </authorList>
    </citation>
    <scope>NUCLEOTIDE SEQUENCE [LARGE SCALE GENOMIC DNA]</scope>
    <source>
        <strain>AH820</strain>
    </source>
</reference>
<accession>B7JK90</accession>
<dbReference type="EC" id="2.7.7.85" evidence="1"/>
<dbReference type="EMBL" id="CP001283">
    <property type="protein sequence ID" value="ACK87532.1"/>
    <property type="molecule type" value="Genomic_DNA"/>
</dbReference>
<dbReference type="RefSeq" id="WP_000392168.1">
    <property type="nucleotide sequence ID" value="NC_011773.1"/>
</dbReference>
<dbReference type="SMR" id="B7JK90"/>
<dbReference type="GeneID" id="93010970"/>
<dbReference type="KEGG" id="bcu:BCAH820_0093"/>
<dbReference type="HOGENOM" id="CLU_787128_0_0_9"/>
<dbReference type="Proteomes" id="UP000001363">
    <property type="component" value="Chromosome"/>
</dbReference>
<dbReference type="GO" id="GO:0004016">
    <property type="term" value="F:adenylate cyclase activity"/>
    <property type="evidence" value="ECO:0007669"/>
    <property type="project" value="TreeGrafter"/>
</dbReference>
<dbReference type="GO" id="GO:0005524">
    <property type="term" value="F:ATP binding"/>
    <property type="evidence" value="ECO:0007669"/>
    <property type="project" value="UniProtKB-UniRule"/>
</dbReference>
<dbReference type="GO" id="GO:0106408">
    <property type="term" value="F:diadenylate cyclase activity"/>
    <property type="evidence" value="ECO:0007669"/>
    <property type="project" value="UniProtKB-EC"/>
</dbReference>
<dbReference type="GO" id="GO:0003677">
    <property type="term" value="F:DNA binding"/>
    <property type="evidence" value="ECO:0007669"/>
    <property type="project" value="UniProtKB-UniRule"/>
</dbReference>
<dbReference type="GO" id="GO:0006281">
    <property type="term" value="P:DNA repair"/>
    <property type="evidence" value="ECO:0007669"/>
    <property type="project" value="UniProtKB-UniRule"/>
</dbReference>
<dbReference type="FunFam" id="1.10.150.20:FF:000023">
    <property type="entry name" value="DNA integrity scanning protein DisA"/>
    <property type="match status" value="1"/>
</dbReference>
<dbReference type="FunFam" id="1.20.1260.110:FF:000001">
    <property type="entry name" value="DNA integrity scanning protein DisA"/>
    <property type="match status" value="1"/>
</dbReference>
<dbReference type="FunFam" id="3.40.1700.10:FF:000001">
    <property type="entry name" value="DNA integrity scanning protein DisA"/>
    <property type="match status" value="1"/>
</dbReference>
<dbReference type="Gene3D" id="1.10.150.20">
    <property type="entry name" value="5' to 3' exonuclease, C-terminal subdomain"/>
    <property type="match status" value="1"/>
</dbReference>
<dbReference type="Gene3D" id="1.20.1260.110">
    <property type="entry name" value="DNA integrity scanning linker region"/>
    <property type="match status" value="1"/>
</dbReference>
<dbReference type="Gene3D" id="3.40.1700.10">
    <property type="entry name" value="DNA integrity scanning protein, DisA, N-terminal domain"/>
    <property type="match status" value="1"/>
</dbReference>
<dbReference type="HAMAP" id="MF_01438">
    <property type="entry name" value="DisA"/>
    <property type="match status" value="1"/>
</dbReference>
<dbReference type="InterPro" id="IPR050338">
    <property type="entry name" value="DisA"/>
</dbReference>
<dbReference type="InterPro" id="IPR038331">
    <property type="entry name" value="DisA_sf"/>
</dbReference>
<dbReference type="InterPro" id="IPR036888">
    <property type="entry name" value="DNA_integrity_DisA_N_sf"/>
</dbReference>
<dbReference type="InterPro" id="IPR018906">
    <property type="entry name" value="DNA_integrity_scan_DisA_link"/>
</dbReference>
<dbReference type="InterPro" id="IPR003390">
    <property type="entry name" value="DNA_integrity_scan_DisA_N"/>
</dbReference>
<dbReference type="InterPro" id="IPR023763">
    <property type="entry name" value="DNA_integrity_scanning_protein"/>
</dbReference>
<dbReference type="InterPro" id="IPR010994">
    <property type="entry name" value="RuvA_2-like"/>
</dbReference>
<dbReference type="NCBIfam" id="NF010009">
    <property type="entry name" value="PRK13482.1"/>
    <property type="match status" value="1"/>
</dbReference>
<dbReference type="PANTHER" id="PTHR34185">
    <property type="entry name" value="DIADENYLATE CYCLASE"/>
    <property type="match status" value="1"/>
</dbReference>
<dbReference type="PANTHER" id="PTHR34185:SF3">
    <property type="entry name" value="DNA INTEGRITY SCANNING PROTEIN DISA"/>
    <property type="match status" value="1"/>
</dbReference>
<dbReference type="Pfam" id="PF02457">
    <property type="entry name" value="DAC"/>
    <property type="match status" value="1"/>
</dbReference>
<dbReference type="Pfam" id="PF10635">
    <property type="entry name" value="DisA-linker"/>
    <property type="match status" value="1"/>
</dbReference>
<dbReference type="SUPFAM" id="SSF47781">
    <property type="entry name" value="RuvA domain 2-like"/>
    <property type="match status" value="1"/>
</dbReference>
<dbReference type="SUPFAM" id="SSF143597">
    <property type="entry name" value="YojJ-like"/>
    <property type="match status" value="1"/>
</dbReference>
<dbReference type="PROSITE" id="PS51794">
    <property type="entry name" value="DAC"/>
    <property type="match status" value="1"/>
</dbReference>
<gene>
    <name evidence="1" type="primary">disA</name>
    <name type="ordered locus">BCAH820_0093</name>
</gene>
<protein>
    <recommendedName>
        <fullName evidence="1">DNA integrity scanning protein DisA</fullName>
    </recommendedName>
    <alternativeName>
        <fullName evidence="1">Cyclic di-AMP synthase</fullName>
        <shortName evidence="1">c-di-AMP synthase</shortName>
    </alternativeName>
    <alternativeName>
        <fullName evidence="1">Diadenylate cyclase</fullName>
        <ecNumber evidence="1">2.7.7.85</ecNumber>
    </alternativeName>
</protein>
<keyword id="KW-0067">ATP-binding</keyword>
<keyword id="KW-0227">DNA damage</keyword>
<keyword id="KW-0234">DNA repair</keyword>
<keyword id="KW-0238">DNA-binding</keyword>
<keyword id="KW-0460">Magnesium</keyword>
<keyword id="KW-0547">Nucleotide-binding</keyword>
<keyword id="KW-0548">Nucleotidyltransferase</keyword>
<keyword id="KW-0808">Transferase</keyword>